<sequence>MGSSEDQAYRLLNDYANGFMVSQVLFAACELGVFDLLAEAPGPLDVAAVAAGVRASAHGTELLLDICVSLKLLKVETRGGKAFYRNTELSSDYLTTVSPTSQCSMLKYMGRTSYRCWGHLADAVREGRNQYLETFGVPAEELFTAIYRSEGERLQFMQALQEVWSVNGRSVLTAFDLSVFPLMCDLGGGAGALAKECMSLYPGCKITVFDIPEVVWTAKQHFSFQEEEQIDFQEGDFFKDPLPEADLYILARVLHDWADGKCSHLLERIYHTCKPGGGILVIESLLDEDRRGPLLTQLYSLNMLVQTEGQERTPTHYHMLLSSAGFRDFQFKKTGAIYDAILARK</sequence>
<feature type="chain" id="PRO_0000083982" description="Acetylserotonin O-methyltransferase">
    <location>
        <begin position="1"/>
        <end position="345"/>
    </location>
</feature>
<feature type="active site" description="Proton donor/acceptor" evidence="17">
    <location>
        <position position="255"/>
    </location>
</feature>
<feature type="binding site">
    <location>
        <position position="147"/>
    </location>
    <ligand>
        <name>S-adenosyl-L-methionine</name>
        <dbReference type="ChEBI" id="CHEBI:59789"/>
    </ligand>
</feature>
<feature type="binding site">
    <location>
        <position position="164"/>
    </location>
    <ligand>
        <name>S-adenosyl-L-methionine</name>
        <dbReference type="ChEBI" id="CHEBI:59789"/>
    </ligand>
</feature>
<feature type="binding site">
    <location>
        <position position="210"/>
    </location>
    <ligand>
        <name>S-adenosyl-L-methionine</name>
        <dbReference type="ChEBI" id="CHEBI:59789"/>
    </ligand>
</feature>
<feature type="binding site">
    <location>
        <begin position="235"/>
        <end position="237"/>
    </location>
    <ligand>
        <name>S-adenosyl-L-methionine</name>
        <dbReference type="ChEBI" id="CHEBI:59789"/>
    </ligand>
</feature>
<feature type="binding site">
    <location>
        <position position="252"/>
    </location>
    <ligand>
        <name>S-adenosyl-L-methionine</name>
        <dbReference type="ChEBI" id="CHEBI:59789"/>
    </ligand>
</feature>
<feature type="binding site">
    <location>
        <position position="256"/>
    </location>
    <ligand>
        <name>substrate</name>
    </ligand>
</feature>
<feature type="binding site">
    <location>
        <position position="302"/>
    </location>
    <ligand>
        <name>substrate</name>
    </ligand>
</feature>
<feature type="binding site">
    <location>
        <position position="306"/>
    </location>
    <ligand>
        <name>substrate</name>
    </ligand>
</feature>
<feature type="splice variant" id="VSP_004284" description="In isoform 3." evidence="13 15">
    <original>G</original>
    <variation>GTWIKLETIILSKLSQGQKTKHRVFSLIG</variation>
    <location>
        <position position="188"/>
    </location>
</feature>
<feature type="splice variant" id="VSP_004285" description="In isoform 2." evidence="14">
    <location>
        <begin position="189"/>
        <end position="235"/>
    </location>
</feature>
<feature type="sequence variant" id="VAR_069111" description="No effect on enzyme activity; dbSNP:rs121918819." evidence="4 7">
    <original>N</original>
    <variation>H</variation>
    <location>
        <position position="13"/>
    </location>
</feature>
<feature type="sequence variant" id="VAR_045991" description="Nearly abolishes enzyme activity; dbSNP:rs17149149." evidence="2 4 7 8">
    <original>N</original>
    <variation>K</variation>
    <location>
        <position position="17"/>
    </location>
</feature>
<feature type="sequence variant" id="VAR_069112" description="Reduced enzyme activity; dbSNP:rs121918823." evidence="4 6 7">
    <original>E</original>
    <variation>Q</variation>
    <location>
        <position position="61"/>
    </location>
</feature>
<feature type="sequence variant" id="VAR_069114" description="No effect on enzyme activity; dbSNP:rs117343570." evidence="2 7">
    <original>K</original>
    <variation>E</variation>
    <location>
        <position position="81"/>
    </location>
</feature>
<feature type="sequence variant" id="VAR_069115" description="In dbSNP:rs201053197." evidence="8">
    <original>R</original>
    <variation>W</variation>
    <location>
        <position position="115"/>
    </location>
</feature>
<feature type="sequence variant" id="VAR_069116" description="In dbSNP:rs192710293." evidence="8">
    <original>G</original>
    <variation>S</variation>
    <location>
        <position position="151"/>
    </location>
</feature>
<feature type="sequence variant" id="VAR_069117" description="In dbSNP:rs373339042." evidence="8">
    <original>V</original>
    <variation>I</variation>
    <location>
        <position position="166"/>
    </location>
</feature>
<feature type="sequence variant" id="VAR_069118" description="Nearly abolishes enzyme activity; dbSNP:rs121918820." evidence="4 7">
    <original>V</original>
    <variation>M</variation>
    <location>
        <position position="171"/>
    </location>
</feature>
<feature type="sequence variant" id="VAR_069119" description="In dbSNP:rs1215166326." evidence="8">
    <original>V</original>
    <variation>G</variation>
    <location>
        <position position="179"/>
    </location>
</feature>
<feature type="sequence variant" id="VAR_069120" description="Nearly abolishes enzyme activity; dbSNP:rs121918824." evidence="4 5 7">
    <original>D</original>
    <variation>G</variation>
    <location>
        <position position="210"/>
    </location>
</feature>
<feature type="sequence variant" id="VAR_069121" description="In dbSNP:rs201316181." evidence="8">
    <original>I</original>
    <variation>M</variation>
    <location>
        <position position="211"/>
    </location>
</feature>
<feature type="sequence variant" id="VAR_069122" description="In dbSNP:rs148036160." evidence="8">
    <original>T</original>
    <variation>M</variation>
    <location>
        <position position="217"/>
    </location>
</feature>
<feature type="sequence variant" id="VAR_069123" description="No effect on enzyme activity; dbSNP:rs121918825." evidence="4 6 7">
    <original>K</original>
    <variation>R</variation>
    <location>
        <position position="219"/>
    </location>
</feature>
<feature type="sequence variant" id="VAR_069125" description="Reduced enzyme activity; dbSNP:rs121918826." evidence="4 6 7 8">
    <original>P</original>
    <variation>L</variation>
    <location>
        <position position="243"/>
    </location>
</feature>
<feature type="sequence variant" id="VAR_069126" description="Reduced enzyme activity; dbSNP:rs146121655." evidence="7">
    <original>I</original>
    <variation>M</variation>
    <location>
        <position position="269"/>
    </location>
</feature>
<feature type="sequence variant" id="VAR_069127" description="Reduced enzyme activity; dbSNP:rs121918827." evidence="4 6 7">
    <original>C</original>
    <variation>S</variation>
    <location>
        <position position="273"/>
    </location>
</feature>
<feature type="sequence variant" id="VAR_069128" description="Reduced enzyme activity; dbSNP:rs1188440875." evidence="2 7">
    <original>G</original>
    <variation>A</variation>
    <location>
        <position position="278"/>
    </location>
</feature>
<feature type="sequence variant" id="VAR_069129" description="No effect on enzyme activity; dbSNP:rs121918821." evidence="3 4 6 7">
    <original>E</original>
    <variation>D</variation>
    <location>
        <position position="288"/>
    </location>
</feature>
<feature type="sequence variant" id="VAR_069130" description="Nearly abolishes enzyme activity; dbSNP:rs121918828." evidence="4 6 7">
    <original>R</original>
    <variation>Q</variation>
    <location>
        <position position="291"/>
    </location>
</feature>
<feature type="sequence variant" id="VAR_069131" description="Found in patients with neuropsychiatric disorders; uncertain significance; nearly abolishes enzyme activity; dbSNP:rs121918822." evidence="2 3 4 5 6 7">
    <original>L</original>
    <variation>F</variation>
    <location>
        <position position="298"/>
    </location>
</feature>
<feature type="sequence variant" id="VAR_069132" description="Found in a patient with bipolar disorder; uncertain significance; reduced enzyme activity." evidence="6 7">
    <original>V</original>
    <variation>M</variation>
    <location>
        <position position="305"/>
    </location>
</feature>
<feature type="mutagenesis site" description="Reduced enzyme activity." evidence="7">
    <original>L</original>
    <variation>F</variation>
    <location>
        <position position="11"/>
    </location>
</feature>
<feature type="mutagenesis site" description="No effect on enzyme activity.">
    <original>L</original>
    <variation>H</variation>
    <location>
        <position position="31"/>
    </location>
</feature>
<feature type="mutagenesis site" description="No effect on enzyme activity." evidence="7">
    <original>R</original>
    <variation>K</variation>
    <location>
        <position position="111"/>
    </location>
</feature>
<feature type="mutagenesis site" description="Nearly abolishes enzyme activity." evidence="7">
    <original>Y</original>
    <variation>H</variation>
    <location>
        <position position="248"/>
    </location>
</feature>
<feature type="mutagenesis site" description="Nearly abolishes enzyme activity." evidence="7">
    <original>T</original>
    <variation>M</variation>
    <location>
        <position position="296"/>
    </location>
</feature>
<feature type="mutagenesis site" description="Reduced enzyme activity." evidence="7">
    <original>H</original>
    <variation>D</variation>
    <location>
        <position position="318"/>
    </location>
</feature>
<feature type="sequence conflict" description="In Ref. 3; BAG37430." evidence="16" ref="3">
    <original>N</original>
    <variation>S</variation>
    <location>
        <position position="302"/>
    </location>
</feature>
<feature type="helix" evidence="18">
    <location>
        <begin position="7"/>
        <end position="31"/>
    </location>
</feature>
<feature type="helix" evidence="18">
    <location>
        <begin position="33"/>
        <end position="39"/>
    </location>
</feature>
<feature type="strand" evidence="18">
    <location>
        <begin position="40"/>
        <end position="42"/>
    </location>
</feature>
<feature type="helix" evidence="18">
    <location>
        <begin position="46"/>
        <end position="53"/>
    </location>
</feature>
<feature type="helix" evidence="18">
    <location>
        <begin position="57"/>
        <end position="69"/>
    </location>
</feature>
<feature type="strand" evidence="18">
    <location>
        <begin position="72"/>
        <end position="78"/>
    </location>
</feature>
<feature type="strand" evidence="18">
    <location>
        <begin position="81"/>
        <end position="86"/>
    </location>
</feature>
<feature type="helix" evidence="18">
    <location>
        <begin position="88"/>
        <end position="94"/>
    </location>
</feature>
<feature type="helix" evidence="18">
    <location>
        <begin position="103"/>
        <end position="111"/>
    </location>
</feature>
<feature type="helix" evidence="18">
    <location>
        <begin position="113"/>
        <end position="117"/>
    </location>
</feature>
<feature type="helix" evidence="18">
    <location>
        <begin position="120"/>
        <end position="126"/>
    </location>
</feature>
<feature type="helix" evidence="18">
    <location>
        <begin position="131"/>
        <end position="135"/>
    </location>
</feature>
<feature type="helix" evidence="18">
    <location>
        <begin position="142"/>
        <end position="146"/>
    </location>
</feature>
<feature type="helix" evidence="18">
    <location>
        <begin position="150"/>
        <end position="161"/>
    </location>
</feature>
<feature type="helix" evidence="18">
    <location>
        <begin position="164"/>
        <end position="173"/>
    </location>
</feature>
<feature type="helix" evidence="18">
    <location>
        <begin position="177"/>
        <end position="179"/>
    </location>
</feature>
<feature type="strand" evidence="18">
    <location>
        <begin position="181"/>
        <end position="186"/>
    </location>
</feature>
<feature type="helix" evidence="18">
    <location>
        <begin position="192"/>
        <end position="200"/>
    </location>
</feature>
<feature type="strand" evidence="18">
    <location>
        <begin position="205"/>
        <end position="210"/>
    </location>
</feature>
<feature type="helix" evidence="18">
    <location>
        <begin position="212"/>
        <end position="221"/>
    </location>
</feature>
<feature type="strand" evidence="18">
    <location>
        <begin position="229"/>
        <end position="235"/>
    </location>
</feature>
<feature type="turn" evidence="18">
    <location>
        <begin position="237"/>
        <end position="239"/>
    </location>
</feature>
<feature type="strand" evidence="18">
    <location>
        <begin position="246"/>
        <end position="253"/>
    </location>
</feature>
<feature type="helix" evidence="18">
    <location>
        <begin position="254"/>
        <end position="256"/>
    </location>
</feature>
<feature type="helix" evidence="18">
    <location>
        <begin position="259"/>
        <end position="272"/>
    </location>
</feature>
<feature type="strand" evidence="18">
    <location>
        <begin position="278"/>
        <end position="283"/>
    </location>
</feature>
<feature type="helix" evidence="18">
    <location>
        <begin position="294"/>
        <end position="305"/>
    </location>
</feature>
<feature type="strand" evidence="18">
    <location>
        <begin position="306"/>
        <end position="308"/>
    </location>
</feature>
<feature type="helix" evidence="18">
    <location>
        <begin position="314"/>
        <end position="324"/>
    </location>
</feature>
<feature type="strand" evidence="18">
    <location>
        <begin position="327"/>
        <end position="332"/>
    </location>
</feature>
<feature type="strand" evidence="18">
    <location>
        <begin position="335"/>
        <end position="337"/>
    </location>
</feature>
<feature type="strand" evidence="18">
    <location>
        <begin position="339"/>
        <end position="344"/>
    </location>
</feature>
<feature type="sequence conflict" description="In Ref. 1; AAA58582/AAA58583/AAA75290, 2; AAA17020 and 3; BAG37430." evidence="16" ref="1 2 3">
    <original>W</original>
    <variation>R</variation>
    <location sequence="P46597-3">
        <position position="190"/>
    </location>
</feature>
<accession>P46597</accession>
<accession>B2RC33</accession>
<accession>Q16598</accession>
<accession>Q5JQ72</accession>
<accession>Q5JQ73</accession>
<reference key="1">
    <citation type="journal article" date="1994" name="J. Biol. Chem.">
        <title>Structural analysis of the human hydroxyindole-O-methyltransferase gene. Presence of two distinct promoters.</title>
        <authorList>
            <person name="Rodriguez I.R."/>
            <person name="Mazuruk K."/>
            <person name="Schoen T.J."/>
            <person name="Chader G.J."/>
        </authorList>
    </citation>
    <scope>NUCLEOTIDE SEQUENCE [GENOMIC DNA] (ISOFORMS 1; 2 AND 3)</scope>
    <scope>TISSUE SPECIFICITY</scope>
</reference>
<reference key="2">
    <citation type="journal article" date="1993" name="DNA Cell Biol.">
        <title>Human hydroxyindole-O-methyltransferase: presence of LINE-1 fragment in a cDNA clone and pineal mRNA.</title>
        <authorList>
            <person name="Donohue S.J."/>
            <person name="Roseboom P.H."/>
            <person name="Illnerova H."/>
            <person name="Weller J.L."/>
            <person name="Klein D.C."/>
        </authorList>
    </citation>
    <scope>NUCLEOTIDE SEQUENCE [MRNA] (ISOFORM 3)</scope>
    <source>
        <tissue>Pineal gland</tissue>
    </source>
</reference>
<reference key="3">
    <citation type="journal article" date="2004" name="Nat. Genet.">
        <title>Complete sequencing and characterization of 21,243 full-length human cDNAs.</title>
        <authorList>
            <person name="Ota T."/>
            <person name="Suzuki Y."/>
            <person name="Nishikawa T."/>
            <person name="Otsuki T."/>
            <person name="Sugiyama T."/>
            <person name="Irie R."/>
            <person name="Wakamatsu A."/>
            <person name="Hayashi K."/>
            <person name="Sato H."/>
            <person name="Nagai K."/>
            <person name="Kimura K."/>
            <person name="Makita H."/>
            <person name="Sekine M."/>
            <person name="Obayashi M."/>
            <person name="Nishi T."/>
            <person name="Shibahara T."/>
            <person name="Tanaka T."/>
            <person name="Ishii S."/>
            <person name="Yamamoto J."/>
            <person name="Saito K."/>
            <person name="Kawai Y."/>
            <person name="Isono Y."/>
            <person name="Nakamura Y."/>
            <person name="Nagahari K."/>
            <person name="Murakami K."/>
            <person name="Yasuda T."/>
            <person name="Iwayanagi T."/>
            <person name="Wagatsuma M."/>
            <person name="Shiratori A."/>
            <person name="Sudo H."/>
            <person name="Hosoiri T."/>
            <person name="Kaku Y."/>
            <person name="Kodaira H."/>
            <person name="Kondo H."/>
            <person name="Sugawara M."/>
            <person name="Takahashi M."/>
            <person name="Kanda K."/>
            <person name="Yokoi T."/>
            <person name="Furuya T."/>
            <person name="Kikkawa E."/>
            <person name="Omura Y."/>
            <person name="Abe K."/>
            <person name="Kamihara K."/>
            <person name="Katsuta N."/>
            <person name="Sato K."/>
            <person name="Tanikawa M."/>
            <person name="Yamazaki M."/>
            <person name="Ninomiya K."/>
            <person name="Ishibashi T."/>
            <person name="Yamashita H."/>
            <person name="Murakawa K."/>
            <person name="Fujimori K."/>
            <person name="Tanai H."/>
            <person name="Kimata M."/>
            <person name="Watanabe M."/>
            <person name="Hiraoka S."/>
            <person name="Chiba Y."/>
            <person name="Ishida S."/>
            <person name="Ono Y."/>
            <person name="Takiguchi S."/>
            <person name="Watanabe S."/>
            <person name="Yosida M."/>
            <person name="Hotuta T."/>
            <person name="Kusano J."/>
            <person name="Kanehori K."/>
            <person name="Takahashi-Fujii A."/>
            <person name="Hara H."/>
            <person name="Tanase T.-O."/>
            <person name="Nomura Y."/>
            <person name="Togiya S."/>
            <person name="Komai F."/>
            <person name="Hara R."/>
            <person name="Takeuchi K."/>
            <person name="Arita M."/>
            <person name="Imose N."/>
            <person name="Musashino K."/>
            <person name="Yuuki H."/>
            <person name="Oshima A."/>
            <person name="Sasaki N."/>
            <person name="Aotsuka S."/>
            <person name="Yoshikawa Y."/>
            <person name="Matsunawa H."/>
            <person name="Ichihara T."/>
            <person name="Shiohata N."/>
            <person name="Sano S."/>
            <person name="Moriya S."/>
            <person name="Momiyama H."/>
            <person name="Satoh N."/>
            <person name="Takami S."/>
            <person name="Terashima Y."/>
            <person name="Suzuki O."/>
            <person name="Nakagawa S."/>
            <person name="Senoh A."/>
            <person name="Mizoguchi H."/>
            <person name="Goto Y."/>
            <person name="Shimizu F."/>
            <person name="Wakebe H."/>
            <person name="Hishigaki H."/>
            <person name="Watanabe T."/>
            <person name="Sugiyama A."/>
            <person name="Takemoto M."/>
            <person name="Kawakami B."/>
            <person name="Yamazaki M."/>
            <person name="Watanabe K."/>
            <person name="Kumagai A."/>
            <person name="Itakura S."/>
            <person name="Fukuzumi Y."/>
            <person name="Fujimori Y."/>
            <person name="Komiyama M."/>
            <person name="Tashiro H."/>
            <person name="Tanigami A."/>
            <person name="Fujiwara T."/>
            <person name="Ono T."/>
            <person name="Yamada K."/>
            <person name="Fujii Y."/>
            <person name="Ozaki K."/>
            <person name="Hirao M."/>
            <person name="Ohmori Y."/>
            <person name="Kawabata A."/>
            <person name="Hikiji T."/>
            <person name="Kobatake N."/>
            <person name="Inagaki H."/>
            <person name="Ikema Y."/>
            <person name="Okamoto S."/>
            <person name="Okitani R."/>
            <person name="Kawakami T."/>
            <person name="Noguchi S."/>
            <person name="Itoh T."/>
            <person name="Shigeta K."/>
            <person name="Senba T."/>
            <person name="Matsumura K."/>
            <person name="Nakajima Y."/>
            <person name="Mizuno T."/>
            <person name="Morinaga M."/>
            <person name="Sasaki M."/>
            <person name="Togashi T."/>
            <person name="Oyama M."/>
            <person name="Hata H."/>
            <person name="Watanabe M."/>
            <person name="Komatsu T."/>
            <person name="Mizushima-Sugano J."/>
            <person name="Satoh T."/>
            <person name="Shirai Y."/>
            <person name="Takahashi Y."/>
            <person name="Nakagawa K."/>
            <person name="Okumura K."/>
            <person name="Nagase T."/>
            <person name="Nomura N."/>
            <person name="Kikuchi H."/>
            <person name="Masuho Y."/>
            <person name="Yamashita R."/>
            <person name="Nakai K."/>
            <person name="Yada T."/>
            <person name="Nakamura Y."/>
            <person name="Ohara O."/>
            <person name="Isogai T."/>
            <person name="Sugano S."/>
        </authorList>
    </citation>
    <scope>NUCLEOTIDE SEQUENCE [LARGE SCALE MRNA] (ISOFORM 3)</scope>
    <source>
        <tissue>Subthalamic nucleus</tissue>
    </source>
</reference>
<reference key="4">
    <citation type="journal article" date="2005" name="Nature">
        <title>The DNA sequence of the human X chromosome.</title>
        <authorList>
            <person name="Ross M.T."/>
            <person name="Grafham D.V."/>
            <person name="Coffey A.J."/>
            <person name="Scherer S."/>
            <person name="McLay K."/>
            <person name="Muzny D."/>
            <person name="Platzer M."/>
            <person name="Howell G.R."/>
            <person name="Burrows C."/>
            <person name="Bird C.P."/>
            <person name="Frankish A."/>
            <person name="Lovell F.L."/>
            <person name="Howe K.L."/>
            <person name="Ashurst J.L."/>
            <person name="Fulton R.S."/>
            <person name="Sudbrak R."/>
            <person name="Wen G."/>
            <person name="Jones M.C."/>
            <person name="Hurles M.E."/>
            <person name="Andrews T.D."/>
            <person name="Scott C.E."/>
            <person name="Searle S."/>
            <person name="Ramser J."/>
            <person name="Whittaker A."/>
            <person name="Deadman R."/>
            <person name="Carter N.P."/>
            <person name="Hunt S.E."/>
            <person name="Chen R."/>
            <person name="Cree A."/>
            <person name="Gunaratne P."/>
            <person name="Havlak P."/>
            <person name="Hodgson A."/>
            <person name="Metzker M.L."/>
            <person name="Richards S."/>
            <person name="Scott G."/>
            <person name="Steffen D."/>
            <person name="Sodergren E."/>
            <person name="Wheeler D.A."/>
            <person name="Worley K.C."/>
            <person name="Ainscough R."/>
            <person name="Ambrose K.D."/>
            <person name="Ansari-Lari M.A."/>
            <person name="Aradhya S."/>
            <person name="Ashwell R.I."/>
            <person name="Babbage A.K."/>
            <person name="Bagguley C.L."/>
            <person name="Ballabio A."/>
            <person name="Banerjee R."/>
            <person name="Barker G.E."/>
            <person name="Barlow K.F."/>
            <person name="Barrett I.P."/>
            <person name="Bates K.N."/>
            <person name="Beare D.M."/>
            <person name="Beasley H."/>
            <person name="Beasley O."/>
            <person name="Beck A."/>
            <person name="Bethel G."/>
            <person name="Blechschmidt K."/>
            <person name="Brady N."/>
            <person name="Bray-Allen S."/>
            <person name="Bridgeman A.M."/>
            <person name="Brown A.J."/>
            <person name="Brown M.J."/>
            <person name="Bonnin D."/>
            <person name="Bruford E.A."/>
            <person name="Buhay C."/>
            <person name="Burch P."/>
            <person name="Burford D."/>
            <person name="Burgess J."/>
            <person name="Burrill W."/>
            <person name="Burton J."/>
            <person name="Bye J.M."/>
            <person name="Carder C."/>
            <person name="Carrel L."/>
            <person name="Chako J."/>
            <person name="Chapman J.C."/>
            <person name="Chavez D."/>
            <person name="Chen E."/>
            <person name="Chen G."/>
            <person name="Chen Y."/>
            <person name="Chen Z."/>
            <person name="Chinault C."/>
            <person name="Ciccodicola A."/>
            <person name="Clark S.Y."/>
            <person name="Clarke G."/>
            <person name="Clee C.M."/>
            <person name="Clegg S."/>
            <person name="Clerc-Blankenburg K."/>
            <person name="Clifford K."/>
            <person name="Cobley V."/>
            <person name="Cole C.G."/>
            <person name="Conquer J.S."/>
            <person name="Corby N."/>
            <person name="Connor R.E."/>
            <person name="David R."/>
            <person name="Davies J."/>
            <person name="Davis C."/>
            <person name="Davis J."/>
            <person name="Delgado O."/>
            <person name="Deshazo D."/>
            <person name="Dhami P."/>
            <person name="Ding Y."/>
            <person name="Dinh H."/>
            <person name="Dodsworth S."/>
            <person name="Draper H."/>
            <person name="Dugan-Rocha S."/>
            <person name="Dunham A."/>
            <person name="Dunn M."/>
            <person name="Durbin K.J."/>
            <person name="Dutta I."/>
            <person name="Eades T."/>
            <person name="Ellwood M."/>
            <person name="Emery-Cohen A."/>
            <person name="Errington H."/>
            <person name="Evans K.L."/>
            <person name="Faulkner L."/>
            <person name="Francis F."/>
            <person name="Frankland J."/>
            <person name="Fraser A.E."/>
            <person name="Galgoczy P."/>
            <person name="Gilbert J."/>
            <person name="Gill R."/>
            <person name="Gloeckner G."/>
            <person name="Gregory S.G."/>
            <person name="Gribble S."/>
            <person name="Griffiths C."/>
            <person name="Grocock R."/>
            <person name="Gu Y."/>
            <person name="Gwilliam R."/>
            <person name="Hamilton C."/>
            <person name="Hart E.A."/>
            <person name="Hawes A."/>
            <person name="Heath P.D."/>
            <person name="Heitmann K."/>
            <person name="Hennig S."/>
            <person name="Hernandez J."/>
            <person name="Hinzmann B."/>
            <person name="Ho S."/>
            <person name="Hoffs M."/>
            <person name="Howden P.J."/>
            <person name="Huckle E.J."/>
            <person name="Hume J."/>
            <person name="Hunt P.J."/>
            <person name="Hunt A.R."/>
            <person name="Isherwood J."/>
            <person name="Jacob L."/>
            <person name="Johnson D."/>
            <person name="Jones S."/>
            <person name="de Jong P.J."/>
            <person name="Joseph S.S."/>
            <person name="Keenan S."/>
            <person name="Kelly S."/>
            <person name="Kershaw J.K."/>
            <person name="Khan Z."/>
            <person name="Kioschis P."/>
            <person name="Klages S."/>
            <person name="Knights A.J."/>
            <person name="Kosiura A."/>
            <person name="Kovar-Smith C."/>
            <person name="Laird G.K."/>
            <person name="Langford C."/>
            <person name="Lawlor S."/>
            <person name="Leversha M."/>
            <person name="Lewis L."/>
            <person name="Liu W."/>
            <person name="Lloyd C."/>
            <person name="Lloyd D.M."/>
            <person name="Loulseged H."/>
            <person name="Loveland J.E."/>
            <person name="Lovell J.D."/>
            <person name="Lozado R."/>
            <person name="Lu J."/>
            <person name="Lyne R."/>
            <person name="Ma J."/>
            <person name="Maheshwari M."/>
            <person name="Matthews L.H."/>
            <person name="McDowall J."/>
            <person name="McLaren S."/>
            <person name="McMurray A."/>
            <person name="Meidl P."/>
            <person name="Meitinger T."/>
            <person name="Milne S."/>
            <person name="Miner G."/>
            <person name="Mistry S.L."/>
            <person name="Morgan M."/>
            <person name="Morris S."/>
            <person name="Mueller I."/>
            <person name="Mullikin J.C."/>
            <person name="Nguyen N."/>
            <person name="Nordsiek G."/>
            <person name="Nyakatura G."/>
            <person name="O'dell C.N."/>
            <person name="Okwuonu G."/>
            <person name="Palmer S."/>
            <person name="Pandian R."/>
            <person name="Parker D."/>
            <person name="Parrish J."/>
            <person name="Pasternak S."/>
            <person name="Patel D."/>
            <person name="Pearce A.V."/>
            <person name="Pearson D.M."/>
            <person name="Pelan S.E."/>
            <person name="Perez L."/>
            <person name="Porter K.M."/>
            <person name="Ramsey Y."/>
            <person name="Reichwald K."/>
            <person name="Rhodes S."/>
            <person name="Ridler K.A."/>
            <person name="Schlessinger D."/>
            <person name="Schueler M.G."/>
            <person name="Sehra H.K."/>
            <person name="Shaw-Smith C."/>
            <person name="Shen H."/>
            <person name="Sheridan E.M."/>
            <person name="Shownkeen R."/>
            <person name="Skuce C.D."/>
            <person name="Smith M.L."/>
            <person name="Sotheran E.C."/>
            <person name="Steingruber H.E."/>
            <person name="Steward C.A."/>
            <person name="Storey R."/>
            <person name="Swann R.M."/>
            <person name="Swarbreck D."/>
            <person name="Tabor P.E."/>
            <person name="Taudien S."/>
            <person name="Taylor T."/>
            <person name="Teague B."/>
            <person name="Thomas K."/>
            <person name="Thorpe A."/>
            <person name="Timms K."/>
            <person name="Tracey A."/>
            <person name="Trevanion S."/>
            <person name="Tromans A.C."/>
            <person name="d'Urso M."/>
            <person name="Verduzco D."/>
            <person name="Villasana D."/>
            <person name="Waldron L."/>
            <person name="Wall M."/>
            <person name="Wang Q."/>
            <person name="Warren J."/>
            <person name="Warry G.L."/>
            <person name="Wei X."/>
            <person name="West A."/>
            <person name="Whitehead S.L."/>
            <person name="Whiteley M.N."/>
            <person name="Wilkinson J.E."/>
            <person name="Willey D.L."/>
            <person name="Williams G."/>
            <person name="Williams L."/>
            <person name="Williamson A."/>
            <person name="Williamson H."/>
            <person name="Wilming L."/>
            <person name="Woodmansey R.L."/>
            <person name="Wray P.W."/>
            <person name="Yen J."/>
            <person name="Zhang J."/>
            <person name="Zhou J."/>
            <person name="Zoghbi H."/>
            <person name="Zorilla S."/>
            <person name="Buck D."/>
            <person name="Reinhardt R."/>
            <person name="Poustka A."/>
            <person name="Rosenthal A."/>
            <person name="Lehrach H."/>
            <person name="Meindl A."/>
            <person name="Minx P.J."/>
            <person name="Hillier L.W."/>
            <person name="Willard H.F."/>
            <person name="Wilson R.K."/>
            <person name="Waterston R.H."/>
            <person name="Rice C.M."/>
            <person name="Vaudin M."/>
            <person name="Coulson A."/>
            <person name="Nelson D.L."/>
            <person name="Weinstock G."/>
            <person name="Sulston J.E."/>
            <person name="Durbin R.M."/>
            <person name="Hubbard T."/>
            <person name="Gibbs R.A."/>
            <person name="Beck S."/>
            <person name="Rogers J."/>
            <person name="Bentley D.R."/>
        </authorList>
    </citation>
    <scope>NUCLEOTIDE SEQUENCE [LARGE SCALE GENOMIC DNA]</scope>
</reference>
<reference key="5">
    <citation type="journal article" date="2004" name="Genome Res.">
        <title>The status, quality, and expansion of the NIH full-length cDNA project: the Mammalian Gene Collection (MGC).</title>
        <authorList>
            <consortium name="The MGC Project Team"/>
        </authorList>
    </citation>
    <scope>NUCLEOTIDE SEQUENCE [LARGE SCALE MRNA] (ISOFORM 2)</scope>
    <source>
        <tissue>Eye</tissue>
    </source>
</reference>
<reference key="6">
    <citation type="journal article" date="1995" name="Brain Res.">
        <title>Human hydroxyindole-O-methyltransferase in pineal gland, retina and Y79 retinoblastoma cells.</title>
        <authorList>
            <person name="Bernard M."/>
            <person name="Donohue S.J."/>
            <person name="Klein D.C."/>
        </authorList>
    </citation>
    <scope>TISSUE SPECIFICITY</scope>
</reference>
<reference key="7">
    <citation type="journal article" date="1996" name="Brain Res.">
        <title>Hydroxyindole-O-methyltransferase in Y-79 cells: regulation by serum.</title>
        <authorList>
            <person name="Bernard M."/>
            <person name="Voisin P."/>
            <person name="Klein D.C."/>
        </authorList>
    </citation>
    <scope>INDUCTION BY SERUM TREATMENT</scope>
</reference>
<reference key="8">
    <citation type="journal article" date="1996" name="J. Neurochem.">
        <title>Retinoic acid increases hydroxyindole-O-methyltransferase activity and mRNA in human Y-79 retinoblastoma cells.</title>
        <authorList>
            <person name="Bernard M."/>
            <person name="Klein D.C."/>
        </authorList>
    </citation>
    <scope>INDUCTION BY RETINOIC ACID</scope>
</reference>
<reference key="9">
    <citation type="journal article" date="2013" name="J. Pineal Res.">
        <title>Crystal structure and functional mapping of human ASMT, the last enzyme of the melatonin synthesis pathway.</title>
        <authorList>
            <person name="Botros H.G."/>
            <person name="Legrand P."/>
            <person name="Pagan C."/>
            <person name="Bondet V."/>
            <person name="Weber P."/>
            <person name="Ben-Abdallah M."/>
            <person name="Lemiere N."/>
            <person name="Huguet G."/>
            <person name="Bellalou J."/>
            <person name="Maronde E."/>
            <person name="Beguin P."/>
            <person name="Haouz A."/>
            <person name="Shepard W."/>
            <person name="Bourgeron T."/>
        </authorList>
    </citation>
    <scope>X-RAY CRYSTALLOGRAPHY (2.4 ANGSTROMS) IN COMPLEXES WITH S-ADENOSYL-L-METHIONINE; N-ACETYL SEROTONIN AND ZINC IONS</scope>
    <scope>CATALYTIC ACTIVITY</scope>
    <scope>FUNCTION</scope>
    <scope>ACTIVE SITE</scope>
    <scope>CHARACTERIZATION OF ISOFORMS 1; 2 AND 3</scope>
    <scope>SUBUNIT</scope>
    <scope>TISSUE SPECIFICITY</scope>
    <scope>CHARACTERIZATION OF VARIANTS HIS-13; LYS-17; GLN-61; GLU-81; MET-171; GLY-210; ARG-219; LEU-243; MET-269; SER-273; ALA-278; ASP-288; GLN-291; PHE-298 AND MET-305</scope>
    <scope>MUTAGENESIS OF LEU-11; ARG-111; TYR-248; THR-296 AND HIS-318</scope>
</reference>
<reference key="10">
    <citation type="journal article" date="2007" name="Mol. Psychiatry">
        <title>Is ASMT a susceptibility gene for autism spectrum disorders? A replication study in European populations.</title>
        <authorList>
            <person name="Toma C."/>
            <person name="Rossi M."/>
            <person name="Sousa I."/>
            <person name="Blasi F."/>
            <person name="Bacchelli E."/>
            <person name="Alen R."/>
            <person name="Vanhala R."/>
            <person name="Monaco A.P."/>
            <person name="Jarvela I."/>
            <person name="Maestrini E."/>
        </authorList>
    </citation>
    <scope>VARIANTS ASP-288 AND PHE-298</scope>
</reference>
<reference key="11">
    <citation type="journal article" date="2008" name="Mol. Psychiatry">
        <title>Abnormal melatonin synthesis in autism spectrum disorders.</title>
        <authorList>
            <person name="Melke J."/>
            <person name="Goubran Botros H."/>
            <person name="Chaste P."/>
            <person name="Betancur C."/>
            <person name="Nygren G."/>
            <person name="Anckarsater H."/>
            <person name="Rastam M."/>
            <person name="Stahlberg O."/>
            <person name="Gillberg I.C."/>
            <person name="Delorme R."/>
            <person name="Chabane N."/>
            <person name="Mouren-Simeoni M.C."/>
            <person name="Fauchereau F."/>
            <person name="Durand C.M."/>
            <person name="Chevalier F."/>
            <person name="Drouot X."/>
            <person name="Collet C."/>
            <person name="Launay J.M."/>
            <person name="Leboyer M."/>
            <person name="Gillberg C."/>
            <person name="Bourgeron T."/>
        </authorList>
    </citation>
    <scope>VARIANTS LYS-17; GLU-81; ALA-278 AND PHE-298</scope>
</reference>
<reference key="12">
    <citation type="journal article" date="2011" name="BMC Med. Genet.">
        <title>Mutation screening of ASMT, the last enzyme of the melatonin pathway, in a large sample of patients with intellectual disability.</title>
        <authorList>
            <person name="Pagan C."/>
            <person name="Botros H.G."/>
            <person name="Poirier K."/>
            <person name="Dumaine A."/>
            <person name="Jamain S."/>
            <person name="Moreno S."/>
            <person name="de Brouwer A."/>
            <person name="Van Esch H."/>
            <person name="Delorme R."/>
            <person name="Launay J.M."/>
            <person name="Tzschach A."/>
            <person name="Kalscheuer V."/>
            <person name="Lacombe D."/>
            <person name="Briault S."/>
            <person name="Laumonnier F."/>
            <person name="Raynaud M."/>
            <person name="van Bon B.W."/>
            <person name="Willemsen M.H."/>
            <person name="Leboyer M."/>
            <person name="Chelly J."/>
            <person name="Bourgeron T."/>
        </authorList>
    </citation>
    <scope>VARIANTS HIS-13; LYS-17; GLN-61; MET-171; GLY-210; ARG-219; LEU-243; SER-273; ASP-288; GLN-291 AND PHE-298</scope>
</reference>
<reference key="13">
    <citation type="journal article" date="2011" name="J. Pineal Res.">
        <title>Genetic variations of the melatonin pathway in patients with attention-deficit and hyperactivity disorders.</title>
        <authorList>
            <person name="Chaste P."/>
            <person name="Clement N."/>
            <person name="Botros H.G."/>
            <person name="Guillaume J.L."/>
            <person name="Konyukh M."/>
            <person name="Pagan C."/>
            <person name="Scheid I."/>
            <person name="Nygren G."/>
            <person name="Anckarsater H."/>
            <person name="Rastam M."/>
            <person name="Stahlberg O."/>
            <person name="Gillberg I.C."/>
            <person name="Melke J."/>
            <person name="Delorme R."/>
            <person name="Leblond C."/>
            <person name="Toro R."/>
            <person name="Huguet G."/>
            <person name="Fauchereau F."/>
            <person name="Durand C."/>
            <person name="Boudarene L."/>
            <person name="Serrano E."/>
            <person name="Lemiere N."/>
            <person name="Launay J.M."/>
            <person name="Leboyer M."/>
            <person name="Jockers R."/>
            <person name="Gillberg C."/>
            <person name="Bourgeron T."/>
        </authorList>
    </citation>
    <scope>VARIANTS GLY-210 AND PHE-298</scope>
</reference>
<reference key="14">
    <citation type="journal article" date="2012" name="Hum. Mol. Genet.">
        <title>Genetic and functional abnormalities of the melatonin biosynthesis pathway in patients with bipolar disorder.</title>
        <authorList>
            <person name="Etain B."/>
            <person name="Dumaine A."/>
            <person name="Bellivier F."/>
            <person name="Pagan C."/>
            <person name="Francelle L."/>
            <person name="Goubran-Botros H."/>
            <person name="Moreno S."/>
            <person name="Deshommes J."/>
            <person name="Moustafa K."/>
            <person name="Le Dudal K."/>
            <person name="Mathieu F."/>
            <person name="Henry C."/>
            <person name="Kahn J.P."/>
            <person name="Launay J.M."/>
            <person name="Muhleisen T.W."/>
            <person name="Cichon S."/>
            <person name="Bourgeron T."/>
            <person name="Leboyer M."/>
            <person name="Jamain S."/>
        </authorList>
    </citation>
    <scope>VARIANTS GLN-61; ARG-219; LEU-243; SER-273; ASP-288; GLN-291; PHE-298 AND MET-305</scope>
</reference>
<reference key="15">
    <citation type="journal article" date="2013" name="PLoS ONE">
        <title>Sequencing ASMT identifies rare mutations in Chinese Han patients with autism.</title>
        <authorList>
            <person name="Wang L."/>
            <person name="Li J."/>
            <person name="Ruan Y."/>
            <person name="Lu T."/>
            <person name="Liu C."/>
            <person name="Jia M."/>
            <person name="Yue W."/>
            <person name="Liu J."/>
            <person name="Bourgeron T."/>
            <person name="Zhang D."/>
        </authorList>
    </citation>
    <scope>VARIANTS LYS-17; TRP-115; SER-151; ILE-166; GLY-179; MET-211; MET-217 AND LEU-243</scope>
</reference>
<organism>
    <name type="scientific">Homo sapiens</name>
    <name type="common">Human</name>
    <dbReference type="NCBI Taxonomy" id="9606"/>
    <lineage>
        <taxon>Eukaryota</taxon>
        <taxon>Metazoa</taxon>
        <taxon>Chordata</taxon>
        <taxon>Craniata</taxon>
        <taxon>Vertebrata</taxon>
        <taxon>Euteleostomi</taxon>
        <taxon>Mammalia</taxon>
        <taxon>Eutheria</taxon>
        <taxon>Euarchontoglires</taxon>
        <taxon>Primates</taxon>
        <taxon>Haplorrhini</taxon>
        <taxon>Catarrhini</taxon>
        <taxon>Hominidae</taxon>
        <taxon>Homo</taxon>
    </lineage>
</organism>
<proteinExistence type="evidence at protein level"/>
<evidence type="ECO:0000255" key="1">
    <source>
        <dbReference type="PROSITE-ProRule" id="PRU01020"/>
    </source>
</evidence>
<evidence type="ECO:0000269" key="2">
    <source>
    </source>
</evidence>
<evidence type="ECO:0000269" key="3">
    <source>
    </source>
</evidence>
<evidence type="ECO:0000269" key="4">
    <source>
    </source>
</evidence>
<evidence type="ECO:0000269" key="5">
    <source>
    </source>
</evidence>
<evidence type="ECO:0000269" key="6">
    <source>
    </source>
</evidence>
<evidence type="ECO:0000269" key="7">
    <source>
    </source>
</evidence>
<evidence type="ECO:0000269" key="8">
    <source>
    </source>
</evidence>
<evidence type="ECO:0000269" key="9">
    <source>
    </source>
</evidence>
<evidence type="ECO:0000269" key="10">
    <source>
    </source>
</evidence>
<evidence type="ECO:0000269" key="11">
    <source>
    </source>
</evidence>
<evidence type="ECO:0000269" key="12">
    <source>
    </source>
</evidence>
<evidence type="ECO:0000303" key="13">
    <source>
    </source>
</evidence>
<evidence type="ECO:0000303" key="14">
    <source>
    </source>
</evidence>
<evidence type="ECO:0000303" key="15">
    <source>
    </source>
</evidence>
<evidence type="ECO:0000305" key="16"/>
<evidence type="ECO:0000305" key="17">
    <source>
    </source>
</evidence>
<evidence type="ECO:0007829" key="18">
    <source>
        <dbReference type="PDB" id="4A6D"/>
    </source>
</evidence>
<dbReference type="EC" id="2.1.1.4" evidence="7"/>
<dbReference type="EMBL" id="U11098">
    <property type="protein sequence ID" value="AAA75291.1"/>
    <property type="molecule type" value="Genomic_DNA"/>
</dbReference>
<dbReference type="EMBL" id="U11089">
    <property type="protein sequence ID" value="AAA75291.1"/>
    <property type="status" value="JOINED"/>
    <property type="molecule type" value="Genomic_DNA"/>
</dbReference>
<dbReference type="EMBL" id="U11093">
    <property type="protein sequence ID" value="AAA75291.1"/>
    <property type="status" value="JOINED"/>
    <property type="molecule type" value="Genomic_DNA"/>
</dbReference>
<dbReference type="EMBL" id="U11094">
    <property type="protein sequence ID" value="AAA75291.1"/>
    <property type="status" value="JOINED"/>
    <property type="molecule type" value="Genomic_DNA"/>
</dbReference>
<dbReference type="EMBL" id="U11095">
    <property type="protein sequence ID" value="AAA75291.1"/>
    <property type="status" value="JOINED"/>
    <property type="molecule type" value="Genomic_DNA"/>
</dbReference>
<dbReference type="EMBL" id="U11096">
    <property type="protein sequence ID" value="AAA75291.1"/>
    <property type="status" value="JOINED"/>
    <property type="molecule type" value="Genomic_DNA"/>
</dbReference>
<dbReference type="EMBL" id="U11092">
    <property type="protein sequence ID" value="AAA75291.1"/>
    <property type="status" value="JOINED"/>
    <property type="molecule type" value="Genomic_DNA"/>
</dbReference>
<dbReference type="EMBL" id="U11097">
    <property type="protein sequence ID" value="AAA75291.1"/>
    <property type="status" value="JOINED"/>
    <property type="molecule type" value="Genomic_DNA"/>
</dbReference>
<dbReference type="EMBL" id="U11098">
    <property type="protein sequence ID" value="AAA75289.1"/>
    <property type="molecule type" value="Genomic_DNA"/>
</dbReference>
<dbReference type="EMBL" id="U11089">
    <property type="protein sequence ID" value="AAA75289.1"/>
    <property type="status" value="JOINED"/>
    <property type="molecule type" value="Genomic_DNA"/>
</dbReference>
<dbReference type="EMBL" id="U11093">
    <property type="protein sequence ID" value="AAA75289.1"/>
    <property type="status" value="JOINED"/>
    <property type="molecule type" value="Genomic_DNA"/>
</dbReference>
<dbReference type="EMBL" id="U11094">
    <property type="protein sequence ID" value="AAA75289.1"/>
    <property type="status" value="JOINED"/>
    <property type="molecule type" value="Genomic_DNA"/>
</dbReference>
<dbReference type="EMBL" id="U11095">
    <property type="protein sequence ID" value="AAA75289.1"/>
    <property type="status" value="JOINED"/>
    <property type="molecule type" value="Genomic_DNA"/>
</dbReference>
<dbReference type="EMBL" id="U11096">
    <property type="protein sequence ID" value="AAA75289.1"/>
    <property type="status" value="JOINED"/>
    <property type="molecule type" value="Genomic_DNA"/>
</dbReference>
<dbReference type="EMBL" id="U11097">
    <property type="protein sequence ID" value="AAA75289.1"/>
    <property type="status" value="JOINED"/>
    <property type="molecule type" value="Genomic_DNA"/>
</dbReference>
<dbReference type="EMBL" id="U11098">
    <property type="protein sequence ID" value="AAA75290.1"/>
    <property type="molecule type" value="Genomic_DNA"/>
</dbReference>
<dbReference type="EMBL" id="U11089">
    <property type="protein sequence ID" value="AAA75290.1"/>
    <property type="status" value="JOINED"/>
    <property type="molecule type" value="Genomic_DNA"/>
</dbReference>
<dbReference type="EMBL" id="U11093">
    <property type="protein sequence ID" value="AAA75290.1"/>
    <property type="status" value="JOINED"/>
    <property type="molecule type" value="Genomic_DNA"/>
</dbReference>
<dbReference type="EMBL" id="U11094">
    <property type="protein sequence ID" value="AAA75290.1"/>
    <property type="status" value="JOINED"/>
    <property type="molecule type" value="Genomic_DNA"/>
</dbReference>
<dbReference type="EMBL" id="U11095">
    <property type="protein sequence ID" value="AAA75290.1"/>
    <property type="status" value="JOINED"/>
    <property type="molecule type" value="Genomic_DNA"/>
</dbReference>
<dbReference type="EMBL" id="U11096">
    <property type="protein sequence ID" value="AAA75290.1"/>
    <property type="status" value="JOINED"/>
    <property type="molecule type" value="Genomic_DNA"/>
</dbReference>
<dbReference type="EMBL" id="U11092">
    <property type="protein sequence ID" value="AAA75290.1"/>
    <property type="status" value="JOINED"/>
    <property type="molecule type" value="Genomic_DNA"/>
</dbReference>
<dbReference type="EMBL" id="U11097">
    <property type="protein sequence ID" value="AAA75290.1"/>
    <property type="status" value="JOINED"/>
    <property type="molecule type" value="Genomic_DNA"/>
</dbReference>
<dbReference type="EMBL" id="U11090">
    <property type="protein sequence ID" value="AAA58582.1"/>
    <property type="molecule type" value="mRNA"/>
</dbReference>
<dbReference type="EMBL" id="U11091">
    <property type="protein sequence ID" value="AAA58583.1"/>
    <property type="molecule type" value="mRNA"/>
</dbReference>
<dbReference type="EMBL" id="M83779">
    <property type="protein sequence ID" value="AAA17020.1"/>
    <property type="molecule type" value="mRNA"/>
</dbReference>
<dbReference type="EMBL" id="AK314922">
    <property type="protein sequence ID" value="BAG37430.1"/>
    <property type="molecule type" value="mRNA"/>
</dbReference>
<dbReference type="EMBL" id="AL683807">
    <property type="status" value="NOT_ANNOTATED_CDS"/>
    <property type="molecule type" value="Genomic_DNA"/>
</dbReference>
<dbReference type="EMBL" id="BC001620">
    <property type="protein sequence ID" value="AAH01620.1"/>
    <property type="molecule type" value="mRNA"/>
</dbReference>
<dbReference type="CCDS" id="CCDS14117.1">
    <molecule id="P46597-3"/>
</dbReference>
<dbReference type="CCDS" id="CCDS55364.1">
    <molecule id="P46597-2"/>
</dbReference>
<dbReference type="PIR" id="I37463">
    <property type="entry name" value="I37463"/>
</dbReference>
<dbReference type="RefSeq" id="NP_001164509.1">
    <molecule id="P46597-3"/>
    <property type="nucleotide sequence ID" value="NM_001171038.2"/>
</dbReference>
<dbReference type="RefSeq" id="NP_001164510.1">
    <molecule id="P46597-2"/>
    <property type="nucleotide sequence ID" value="NM_001171039.1"/>
</dbReference>
<dbReference type="RefSeq" id="NP_001403454.1">
    <molecule id="P46597-1"/>
    <property type="nucleotide sequence ID" value="NM_001416525.1"/>
</dbReference>
<dbReference type="RefSeq" id="NP_004034.2">
    <property type="nucleotide sequence ID" value="NM_004043.2"/>
</dbReference>
<dbReference type="PDB" id="4A6D">
    <property type="method" value="X-ray"/>
    <property type="resolution" value="2.40 A"/>
    <property type="chains" value="A=1-345"/>
</dbReference>
<dbReference type="PDB" id="4A6E">
    <property type="method" value="X-ray"/>
    <property type="resolution" value="2.70 A"/>
    <property type="chains" value="A=1-345"/>
</dbReference>
<dbReference type="PDBsum" id="4A6D"/>
<dbReference type="PDBsum" id="4A6E"/>
<dbReference type="SMR" id="P46597"/>
<dbReference type="BioGRID" id="106930">
    <property type="interactions" value="1"/>
</dbReference>
<dbReference type="FunCoup" id="P46597">
    <property type="interactions" value="58"/>
</dbReference>
<dbReference type="STRING" id="9606.ENSP00000370639"/>
<dbReference type="DrugBank" id="DB01065">
    <property type="generic name" value="Melatonin"/>
</dbReference>
<dbReference type="BioMuta" id="ASMT"/>
<dbReference type="DMDM" id="1170276"/>
<dbReference type="MassIVE" id="P46597"/>
<dbReference type="PaxDb" id="9606-ENSP00000370639"/>
<dbReference type="PeptideAtlas" id="P46597"/>
<dbReference type="ProteomicsDB" id="55743">
    <molecule id="P46597-1"/>
</dbReference>
<dbReference type="ProteomicsDB" id="55744">
    <molecule id="P46597-2"/>
</dbReference>
<dbReference type="ProteomicsDB" id="55745">
    <molecule id="P46597-3"/>
</dbReference>
<dbReference type="Antibodypedia" id="35250">
    <property type="antibodies" value="177 antibodies from 25 providers"/>
</dbReference>
<dbReference type="DNASU" id="438"/>
<dbReference type="Ensembl" id="ENST00000381229.9">
    <molecule id="P46597-1"/>
    <property type="protein sequence ID" value="ENSP00000370627.4"/>
    <property type="gene ID" value="ENSG00000196433.13"/>
</dbReference>
<dbReference type="Ensembl" id="ENST00000381233.8">
    <molecule id="P46597-2"/>
    <property type="protein sequence ID" value="ENSP00000370631.3"/>
    <property type="gene ID" value="ENSG00000196433.13"/>
</dbReference>
<dbReference type="Ensembl" id="ENST00000381241.9">
    <molecule id="P46597-3"/>
    <property type="protein sequence ID" value="ENSP00000370639.3"/>
    <property type="gene ID" value="ENSG00000196433.13"/>
</dbReference>
<dbReference type="Ensembl" id="ENST00000711208.1">
    <molecule id="P46597-2"/>
    <property type="protein sequence ID" value="ENSP00000518606.1"/>
    <property type="gene ID" value="ENSG00000292336.1"/>
</dbReference>
<dbReference type="Ensembl" id="ENST00000711209.1">
    <molecule id="P46597-1"/>
    <property type="protein sequence ID" value="ENSP00000518607.1"/>
    <property type="gene ID" value="ENSG00000292336.1"/>
</dbReference>
<dbReference type="Ensembl" id="ENST00000711210.1">
    <molecule id="P46597-3"/>
    <property type="protein sequence ID" value="ENSP00000518608.1"/>
    <property type="gene ID" value="ENSG00000292336.1"/>
</dbReference>
<dbReference type="GeneID" id="438"/>
<dbReference type="KEGG" id="hsa:438"/>
<dbReference type="MANE-Select" id="ENST00000381241.9">
    <molecule id="P46597-3"/>
    <property type="protein sequence ID" value="ENSP00000370639.3"/>
    <property type="RefSeq nucleotide sequence ID" value="NM_001171038.2"/>
    <property type="RefSeq protein sequence ID" value="NP_001164509.1"/>
</dbReference>
<dbReference type="UCSC" id="uc010ncy.4">
    <molecule id="P46597-1"/>
    <property type="organism name" value="human"/>
</dbReference>
<dbReference type="AGR" id="HGNC:750"/>
<dbReference type="CTD" id="438"/>
<dbReference type="DisGeNET" id="438"/>
<dbReference type="GeneCards" id="ASMT"/>
<dbReference type="HGNC" id="HGNC:750">
    <property type="gene designation" value="ASMT"/>
</dbReference>
<dbReference type="HPA" id="ENSG00000196433">
    <property type="expression patterns" value="Tissue enriched (choroid)"/>
</dbReference>
<dbReference type="MalaCards" id="ASMT"/>
<dbReference type="MIM" id="300015">
    <property type="type" value="gene"/>
</dbReference>
<dbReference type="MIM" id="402500">
    <property type="type" value="gene"/>
</dbReference>
<dbReference type="neXtProt" id="NX_P46597"/>
<dbReference type="OpenTargets" id="ENSG00000196433"/>
<dbReference type="PharmGKB" id="PA25049"/>
<dbReference type="VEuPathDB" id="HostDB:ENSG00000196433"/>
<dbReference type="eggNOG" id="KOG3178">
    <property type="taxonomic scope" value="Eukaryota"/>
</dbReference>
<dbReference type="GeneTree" id="ENSGT00940000161561"/>
<dbReference type="HOGENOM" id="CLU_005533_4_2_1"/>
<dbReference type="InParanoid" id="P46597"/>
<dbReference type="OMA" id="ADFSLHM"/>
<dbReference type="OrthoDB" id="9533372at2759"/>
<dbReference type="PAN-GO" id="P46597">
    <property type="GO annotations" value="3 GO annotations based on evolutionary models"/>
</dbReference>
<dbReference type="PhylomeDB" id="P46597"/>
<dbReference type="TreeFam" id="TF314574"/>
<dbReference type="BioCyc" id="MetaCyc:HS09884-MONOMER"/>
<dbReference type="BRENDA" id="2.1.1.4">
    <property type="organism ID" value="2681"/>
</dbReference>
<dbReference type="PathwayCommons" id="P46597"/>
<dbReference type="Reactome" id="R-HSA-209931">
    <property type="pathway name" value="Serotonin and melatonin biosynthesis"/>
</dbReference>
<dbReference type="SIGNOR" id="P46597"/>
<dbReference type="UniPathway" id="UPA00837">
    <property type="reaction ID" value="UER00815"/>
</dbReference>
<dbReference type="BioGRID-ORCS" id="438">
    <property type="hits" value="8 hits in 611 CRISPR screens"/>
</dbReference>
<dbReference type="ChiTaRS" id="ASMT">
    <property type="organism name" value="human"/>
</dbReference>
<dbReference type="EvolutionaryTrace" id="P46597"/>
<dbReference type="GeneWiki" id="Acetylserotonin_O-methyltransferase"/>
<dbReference type="GenomeRNAi" id="438"/>
<dbReference type="Pharos" id="P46597">
    <property type="development level" value="Tbio"/>
</dbReference>
<dbReference type="PRO" id="PR:P46597"/>
<dbReference type="Proteomes" id="UP000005640">
    <property type="component" value="Chromosome X"/>
</dbReference>
<dbReference type="Proteomes" id="UP000005640">
    <property type="component" value="Chromosome Y"/>
</dbReference>
<dbReference type="RNAct" id="P46597">
    <property type="molecule type" value="protein"/>
</dbReference>
<dbReference type="Bgee" id="ENSG00000196433">
    <property type="expression patterns" value="Expressed in male germ line stem cell (sensu Vertebrata) in testis and 97 other cell types or tissues"/>
</dbReference>
<dbReference type="ExpressionAtlas" id="P46597">
    <property type="expression patterns" value="baseline and differential"/>
</dbReference>
<dbReference type="GO" id="GO:0005829">
    <property type="term" value="C:cytosol"/>
    <property type="evidence" value="ECO:0000304"/>
    <property type="project" value="Reactome"/>
</dbReference>
<dbReference type="GO" id="GO:0017096">
    <property type="term" value="F:acetylserotonin O-methyltransferase activity"/>
    <property type="evidence" value="ECO:0000314"/>
    <property type="project" value="UniProtKB"/>
</dbReference>
<dbReference type="GO" id="GO:0042802">
    <property type="term" value="F:identical protein binding"/>
    <property type="evidence" value="ECO:0000353"/>
    <property type="project" value="IntAct"/>
</dbReference>
<dbReference type="GO" id="GO:0008171">
    <property type="term" value="F:O-methyltransferase activity"/>
    <property type="evidence" value="ECO:0000304"/>
    <property type="project" value="ProtInc"/>
</dbReference>
<dbReference type="GO" id="GO:0042803">
    <property type="term" value="F:protein homodimerization activity"/>
    <property type="evidence" value="ECO:0000353"/>
    <property type="project" value="UniProtKB"/>
</dbReference>
<dbReference type="GO" id="GO:0008172">
    <property type="term" value="F:S-methyltransferase activity"/>
    <property type="evidence" value="ECO:0000304"/>
    <property type="project" value="Reactome"/>
</dbReference>
<dbReference type="GO" id="GO:0046219">
    <property type="term" value="P:indolalkylamine biosynthetic process"/>
    <property type="evidence" value="ECO:0000304"/>
    <property type="project" value="Reactome"/>
</dbReference>
<dbReference type="GO" id="GO:0006629">
    <property type="term" value="P:lipid metabolic process"/>
    <property type="evidence" value="ECO:0007669"/>
    <property type="project" value="UniProtKB-KW"/>
</dbReference>
<dbReference type="GO" id="GO:0030187">
    <property type="term" value="P:melatonin biosynthetic process"/>
    <property type="evidence" value="ECO:0000314"/>
    <property type="project" value="UniProtKB"/>
</dbReference>
<dbReference type="GO" id="GO:0032259">
    <property type="term" value="P:methylation"/>
    <property type="evidence" value="ECO:0000318"/>
    <property type="project" value="GO_Central"/>
</dbReference>
<dbReference type="GO" id="GO:0006412">
    <property type="term" value="P:translation"/>
    <property type="evidence" value="ECO:0000304"/>
    <property type="project" value="ProtInc"/>
</dbReference>
<dbReference type="CDD" id="cd02440">
    <property type="entry name" value="AdoMet_MTases"/>
    <property type="match status" value="1"/>
</dbReference>
<dbReference type="FunFam" id="1.10.10.10:FF:000358">
    <property type="entry name" value="Acetylserotonin O-methyltransferase"/>
    <property type="match status" value="1"/>
</dbReference>
<dbReference type="FunFam" id="3.40.50.150:FF:000738">
    <property type="entry name" value="Acetylserotonin O-methyltransferase"/>
    <property type="match status" value="1"/>
</dbReference>
<dbReference type="Gene3D" id="3.40.50.150">
    <property type="entry name" value="Vaccinia Virus protein VP39"/>
    <property type="match status" value="1"/>
</dbReference>
<dbReference type="Gene3D" id="1.10.10.10">
    <property type="entry name" value="Winged helix-like DNA-binding domain superfamily/Winged helix DNA-binding domain"/>
    <property type="match status" value="1"/>
</dbReference>
<dbReference type="InterPro" id="IPR016461">
    <property type="entry name" value="COMT-like"/>
</dbReference>
<dbReference type="InterPro" id="IPR001077">
    <property type="entry name" value="O_MeTrfase_dom"/>
</dbReference>
<dbReference type="InterPro" id="IPR012967">
    <property type="entry name" value="Plant_O-MeTrfase_dimerisation"/>
</dbReference>
<dbReference type="InterPro" id="IPR029063">
    <property type="entry name" value="SAM-dependent_MTases_sf"/>
</dbReference>
<dbReference type="InterPro" id="IPR036388">
    <property type="entry name" value="WH-like_DNA-bd_sf"/>
</dbReference>
<dbReference type="InterPro" id="IPR036390">
    <property type="entry name" value="WH_DNA-bd_sf"/>
</dbReference>
<dbReference type="PANTHER" id="PTHR43712:SF2">
    <property type="entry name" value="O-METHYLTRANSFERASE CICE"/>
    <property type="match status" value="1"/>
</dbReference>
<dbReference type="PANTHER" id="PTHR43712">
    <property type="entry name" value="PUTATIVE (AFU_ORTHOLOGUE AFUA_4G14580)-RELATED"/>
    <property type="match status" value="1"/>
</dbReference>
<dbReference type="Pfam" id="PF08100">
    <property type="entry name" value="Dimerisation"/>
    <property type="match status" value="1"/>
</dbReference>
<dbReference type="Pfam" id="PF00891">
    <property type="entry name" value="Methyltransf_2"/>
    <property type="match status" value="1"/>
</dbReference>
<dbReference type="PIRSF" id="PIRSF005739">
    <property type="entry name" value="O-mtase"/>
    <property type="match status" value="1"/>
</dbReference>
<dbReference type="SUPFAM" id="SSF53335">
    <property type="entry name" value="S-adenosyl-L-methionine-dependent methyltransferases"/>
    <property type="match status" value="1"/>
</dbReference>
<dbReference type="SUPFAM" id="SSF46785">
    <property type="entry name" value="Winged helix' DNA-binding domain"/>
    <property type="match status" value="1"/>
</dbReference>
<dbReference type="PROSITE" id="PS51683">
    <property type="entry name" value="SAM_OMT_II"/>
    <property type="match status" value="1"/>
</dbReference>
<name>ASMT_HUMAN</name>
<keyword id="KW-0002">3D-structure</keyword>
<keyword id="KW-0025">Alternative splicing</keyword>
<keyword id="KW-0443">Lipid metabolism</keyword>
<keyword id="KW-0471">Melatonin biosynthesis</keyword>
<keyword id="KW-0489">Methyltransferase</keyword>
<keyword id="KW-1267">Proteomics identification</keyword>
<keyword id="KW-1185">Reference proteome</keyword>
<keyword id="KW-0949">S-adenosyl-L-methionine</keyword>
<keyword id="KW-0808">Transferase</keyword>
<comment type="function">
    <molecule>Isoform 1</molecule>
    <text evidence="7">Catalyzes the transfer of a methyl group onto N-acetylserotonin, producing melatonin (N-acetyl-5-methoxytryptamine).</text>
</comment>
<comment type="function">
    <molecule>Isoform 2</molecule>
    <text evidence="7">Does not show Acetylserotonin O-methyltransferase activity.</text>
</comment>
<comment type="function">
    <molecule>Isoform 3</molecule>
    <text evidence="7">Does not show Acetylserotonin O-methyltransferase activity.</text>
</comment>
<comment type="catalytic activity">
    <reaction evidence="7">
        <text>N-acetylserotonin + S-adenosyl-L-methionine = melatonin + S-adenosyl-L-homocysteine + H(+)</text>
        <dbReference type="Rhea" id="RHEA:15573"/>
        <dbReference type="ChEBI" id="CHEBI:15378"/>
        <dbReference type="ChEBI" id="CHEBI:16796"/>
        <dbReference type="ChEBI" id="CHEBI:17697"/>
        <dbReference type="ChEBI" id="CHEBI:57856"/>
        <dbReference type="ChEBI" id="CHEBI:59789"/>
        <dbReference type="EC" id="2.1.1.4"/>
    </reaction>
    <physiologicalReaction direction="right-to-left" evidence="7">
        <dbReference type="Rhea" id="RHEA:15575"/>
    </physiologicalReaction>
</comment>
<comment type="pathway">
    <text evidence="17">Aromatic compound metabolism; melatonin biosynthesis; melatonin from serotonin: step 1/2.</text>
</comment>
<comment type="subunit">
    <text evidence="7">Homodimer.</text>
</comment>
<comment type="interaction">
    <interactant intactId="EBI-6502097">
        <id>P46597</id>
    </interactant>
    <interactant intactId="EBI-6502097">
        <id>P46597</id>
        <label>ASMT</label>
    </interactant>
    <organismsDiffer>false</organismsDiffer>
    <experiments>3</experiments>
</comment>
<comment type="alternative products">
    <event type="alternative splicing"/>
    <isoform>
        <id>P46597-1</id>
        <name>1</name>
        <sequence type="displayed"/>
    </isoform>
    <isoform>
        <id>P46597-2</id>
        <name>2</name>
        <sequence type="described" ref="VSP_004285"/>
    </isoform>
    <isoform>
        <id>P46597-3</id>
        <name>3</name>
        <sequence type="described" ref="VSP_004284"/>
    </isoform>
</comment>
<comment type="tissue specificity">
    <text evidence="7 9 10">Expressed in the pineal gland (at protein level). In the retina, very low expression is found at the mRNA level (PubMed:7989373), and not at the protein level (PubMed:8574683).</text>
</comment>
<comment type="induction">
    <text evidence="11 12">By all-trans-, 9-cis- and 13-cis-retinoic acid and by serum treatment, following starvation, in the retinoblastoma cell line Y79.</text>
</comment>
<comment type="miscellaneous">
    <text>The gene coding for this protein is located in the pseudoautosomal region 1 (PAR1) of X and Y chromosomes.</text>
</comment>
<comment type="miscellaneous">
    <molecule>Isoform 3</molecule>
    <text evidence="16">Includes part of a LINE-1 element.</text>
</comment>
<comment type="similarity">
    <text evidence="1">Belongs to the class I-like SAM-binding methyltransferase superfamily. Cation-independent O-methyltransferase family.</text>
</comment>
<comment type="online information" name="Wikipedia">
    <link uri="https://en.wikipedia.org/wiki/5-hydroxyindole-O-methyltransferase"/>
    <text>5-hydroxyindole-O-methyltransferase entry</text>
</comment>
<gene>
    <name type="primary">ASMT</name>
</gene>
<protein>
    <recommendedName>
        <fullName>Acetylserotonin O-methyltransferase</fullName>
        <ecNumber evidence="7">2.1.1.4</ecNumber>
    </recommendedName>
    <alternativeName>
        <fullName>Hydroxyindole O-methyltransferase</fullName>
        <shortName>HIOMT</shortName>
    </alternativeName>
</protein>